<accession>Q6WRH5</accession>
<dbReference type="EMBL" id="AY273904">
    <property type="protein sequence ID" value="AAQ20021.1"/>
    <property type="molecule type" value="Genomic_DNA"/>
</dbReference>
<dbReference type="SMR" id="Q6WRH5"/>
<dbReference type="GO" id="GO:0005743">
    <property type="term" value="C:mitochondrial inner membrane"/>
    <property type="evidence" value="ECO:0007669"/>
    <property type="project" value="UniProtKB-SubCell"/>
</dbReference>
<dbReference type="GO" id="GO:0045275">
    <property type="term" value="C:respiratory chain complex III"/>
    <property type="evidence" value="ECO:0007669"/>
    <property type="project" value="InterPro"/>
</dbReference>
<dbReference type="GO" id="GO:0046872">
    <property type="term" value="F:metal ion binding"/>
    <property type="evidence" value="ECO:0007669"/>
    <property type="project" value="UniProtKB-KW"/>
</dbReference>
<dbReference type="GO" id="GO:0008121">
    <property type="term" value="F:ubiquinol-cytochrome-c reductase activity"/>
    <property type="evidence" value="ECO:0007669"/>
    <property type="project" value="InterPro"/>
</dbReference>
<dbReference type="GO" id="GO:0006122">
    <property type="term" value="P:mitochondrial electron transport, ubiquinol to cytochrome c"/>
    <property type="evidence" value="ECO:0007669"/>
    <property type="project" value="TreeGrafter"/>
</dbReference>
<dbReference type="CDD" id="cd00290">
    <property type="entry name" value="cytochrome_b_C"/>
    <property type="match status" value="1"/>
</dbReference>
<dbReference type="CDD" id="cd00284">
    <property type="entry name" value="Cytochrome_b_N"/>
    <property type="match status" value="1"/>
</dbReference>
<dbReference type="FunFam" id="1.20.810.10:FF:000002">
    <property type="entry name" value="Cytochrome b"/>
    <property type="match status" value="1"/>
</dbReference>
<dbReference type="Gene3D" id="1.20.810.10">
    <property type="entry name" value="Cytochrome Bc1 Complex, Chain C"/>
    <property type="match status" value="1"/>
</dbReference>
<dbReference type="InterPro" id="IPR005798">
    <property type="entry name" value="Cyt_b/b6_C"/>
</dbReference>
<dbReference type="InterPro" id="IPR036150">
    <property type="entry name" value="Cyt_b/b6_C_sf"/>
</dbReference>
<dbReference type="InterPro" id="IPR005797">
    <property type="entry name" value="Cyt_b/b6_N"/>
</dbReference>
<dbReference type="InterPro" id="IPR027387">
    <property type="entry name" value="Cytb/b6-like_sf"/>
</dbReference>
<dbReference type="InterPro" id="IPR030689">
    <property type="entry name" value="Cytochrome_b"/>
</dbReference>
<dbReference type="InterPro" id="IPR048260">
    <property type="entry name" value="Cytochrome_b_C_euk/bac"/>
</dbReference>
<dbReference type="InterPro" id="IPR048259">
    <property type="entry name" value="Cytochrome_b_N_euk/bac"/>
</dbReference>
<dbReference type="InterPro" id="IPR016174">
    <property type="entry name" value="Di-haem_cyt_TM"/>
</dbReference>
<dbReference type="PANTHER" id="PTHR19271">
    <property type="entry name" value="CYTOCHROME B"/>
    <property type="match status" value="1"/>
</dbReference>
<dbReference type="PANTHER" id="PTHR19271:SF16">
    <property type="entry name" value="CYTOCHROME B"/>
    <property type="match status" value="1"/>
</dbReference>
<dbReference type="Pfam" id="PF00032">
    <property type="entry name" value="Cytochrom_B_C"/>
    <property type="match status" value="1"/>
</dbReference>
<dbReference type="Pfam" id="PF00033">
    <property type="entry name" value="Cytochrome_B"/>
    <property type="match status" value="1"/>
</dbReference>
<dbReference type="PIRSF" id="PIRSF038885">
    <property type="entry name" value="COB"/>
    <property type="match status" value="1"/>
</dbReference>
<dbReference type="SUPFAM" id="SSF81648">
    <property type="entry name" value="a domain/subunit of cytochrome bc1 complex (Ubiquinol-cytochrome c reductase)"/>
    <property type="match status" value="1"/>
</dbReference>
<dbReference type="SUPFAM" id="SSF81342">
    <property type="entry name" value="Transmembrane di-heme cytochromes"/>
    <property type="match status" value="1"/>
</dbReference>
<dbReference type="PROSITE" id="PS51003">
    <property type="entry name" value="CYTB_CTER"/>
    <property type="match status" value="1"/>
</dbReference>
<dbReference type="PROSITE" id="PS51002">
    <property type="entry name" value="CYTB_NTER"/>
    <property type="match status" value="1"/>
</dbReference>
<evidence type="ECO:0000250" key="1"/>
<evidence type="ECO:0000250" key="2">
    <source>
        <dbReference type="UniProtKB" id="P00157"/>
    </source>
</evidence>
<evidence type="ECO:0000255" key="3">
    <source>
        <dbReference type="PROSITE-ProRule" id="PRU00967"/>
    </source>
</evidence>
<evidence type="ECO:0000255" key="4">
    <source>
        <dbReference type="PROSITE-ProRule" id="PRU00968"/>
    </source>
</evidence>
<reference key="1">
    <citation type="journal article" date="2003" name="Cladistics">
        <title>Phylogenetics of Sigmodontinae (Rodentia, Muroidea, Cricetidae), with special reference to the akodont group, and with additional comments on historical biogeography.</title>
        <authorList>
            <person name="D'Elia G."/>
        </authorList>
    </citation>
    <scope>NUCLEOTIDE SEQUENCE [GENOMIC DNA]</scope>
</reference>
<comment type="function">
    <text evidence="2">Component of the ubiquinol-cytochrome c reductase complex (complex III or cytochrome b-c1 complex) that is part of the mitochondrial respiratory chain. The b-c1 complex mediates electron transfer from ubiquinol to cytochrome c. Contributes to the generation of a proton gradient across the mitochondrial membrane that is then used for ATP synthesis.</text>
</comment>
<comment type="cofactor">
    <cofactor evidence="2">
        <name>heme b</name>
        <dbReference type="ChEBI" id="CHEBI:60344"/>
    </cofactor>
    <text evidence="2">Binds 2 heme b groups non-covalently.</text>
</comment>
<comment type="subunit">
    <text evidence="2">The cytochrome bc1 complex contains 11 subunits: 3 respiratory subunits (MT-CYB, CYC1 and UQCRFS1), 2 core proteins (UQCRC1 and UQCRC2) and 6 low-molecular weight proteins (UQCRH/QCR6, UQCRB/QCR7, UQCRQ/QCR8, UQCR10/QCR9, UQCR11/QCR10 and a cleavage product of UQCRFS1). This cytochrome bc1 complex then forms a dimer.</text>
</comment>
<comment type="subcellular location">
    <subcellularLocation>
        <location evidence="2">Mitochondrion inner membrane</location>
        <topology evidence="2">Multi-pass membrane protein</topology>
    </subcellularLocation>
</comment>
<comment type="miscellaneous">
    <text evidence="1">Heme 1 (or BL or b562) is low-potential and absorbs at about 562 nm, and heme 2 (or BH or b566) is high-potential and absorbs at about 566 nm.</text>
</comment>
<comment type="similarity">
    <text evidence="3 4">Belongs to the cytochrome b family.</text>
</comment>
<comment type="caution">
    <text evidence="2">The full-length protein contains only eight transmembrane helices, not nine as predicted by bioinformatics tools.</text>
</comment>
<name>CYB_AKODO</name>
<protein>
    <recommendedName>
        <fullName>Cytochrome b</fullName>
    </recommendedName>
    <alternativeName>
        <fullName>Complex III subunit 3</fullName>
    </alternativeName>
    <alternativeName>
        <fullName>Complex III subunit III</fullName>
    </alternativeName>
    <alternativeName>
        <fullName>Cytochrome b-c1 complex subunit 3</fullName>
    </alternativeName>
    <alternativeName>
        <fullName>Ubiquinol-cytochrome-c reductase complex cytochrome b subunit</fullName>
    </alternativeName>
</protein>
<gene>
    <name type="primary">MT-CYB</name>
    <name type="synonym">COB</name>
    <name type="synonym">CYTB</name>
    <name type="synonym">MTCYB</name>
</gene>
<feature type="chain" id="PRO_0000254972" description="Cytochrome b">
    <location>
        <begin position="1"/>
        <end position="379"/>
    </location>
</feature>
<feature type="transmembrane region" description="Helical" evidence="2">
    <location>
        <begin position="33"/>
        <end position="53"/>
    </location>
</feature>
<feature type="transmembrane region" description="Helical" evidence="2">
    <location>
        <begin position="77"/>
        <end position="98"/>
    </location>
</feature>
<feature type="transmembrane region" description="Helical" evidence="2">
    <location>
        <begin position="113"/>
        <end position="133"/>
    </location>
</feature>
<feature type="transmembrane region" description="Helical" evidence="2">
    <location>
        <begin position="178"/>
        <end position="198"/>
    </location>
</feature>
<feature type="transmembrane region" description="Helical" evidence="2">
    <location>
        <begin position="226"/>
        <end position="246"/>
    </location>
</feature>
<feature type="transmembrane region" description="Helical" evidence="2">
    <location>
        <begin position="288"/>
        <end position="308"/>
    </location>
</feature>
<feature type="transmembrane region" description="Helical" evidence="2">
    <location>
        <begin position="320"/>
        <end position="340"/>
    </location>
</feature>
<feature type="transmembrane region" description="Helical" evidence="2">
    <location>
        <begin position="347"/>
        <end position="367"/>
    </location>
</feature>
<feature type="binding site" description="axial binding residue" evidence="2">
    <location>
        <position position="83"/>
    </location>
    <ligand>
        <name>heme b</name>
        <dbReference type="ChEBI" id="CHEBI:60344"/>
        <label>b562</label>
    </ligand>
    <ligandPart>
        <name>Fe</name>
        <dbReference type="ChEBI" id="CHEBI:18248"/>
    </ligandPart>
</feature>
<feature type="binding site" description="axial binding residue" evidence="2">
    <location>
        <position position="97"/>
    </location>
    <ligand>
        <name>heme b</name>
        <dbReference type="ChEBI" id="CHEBI:60344"/>
        <label>b566</label>
    </ligand>
    <ligandPart>
        <name>Fe</name>
        <dbReference type="ChEBI" id="CHEBI:18248"/>
    </ligandPart>
</feature>
<feature type="binding site" description="axial binding residue" evidence="2">
    <location>
        <position position="182"/>
    </location>
    <ligand>
        <name>heme b</name>
        <dbReference type="ChEBI" id="CHEBI:60344"/>
        <label>b562</label>
    </ligand>
    <ligandPart>
        <name>Fe</name>
        <dbReference type="ChEBI" id="CHEBI:18248"/>
    </ligandPart>
</feature>
<feature type="binding site" description="axial binding residue" evidence="2">
    <location>
        <position position="196"/>
    </location>
    <ligand>
        <name>heme b</name>
        <dbReference type="ChEBI" id="CHEBI:60344"/>
        <label>b566</label>
    </ligand>
    <ligandPart>
        <name>Fe</name>
        <dbReference type="ChEBI" id="CHEBI:18248"/>
    </ligandPart>
</feature>
<feature type="binding site" evidence="2">
    <location>
        <position position="201"/>
    </location>
    <ligand>
        <name>a ubiquinone</name>
        <dbReference type="ChEBI" id="CHEBI:16389"/>
    </ligand>
</feature>
<proteinExistence type="inferred from homology"/>
<sequence length="379" mass="42745">MKILRKNHPLFKIINHSFIDLPTPSNISSWWNFGSLLGMCLMIQILTGLFLAMHYTSDTTTAFSSVAHICRDVNYGWLIRYLHANGASMFFICLFIHVGRGIYYGSYVLSETWNIGIILFLTTMATAFVGYVLPWGQMSFWGATVITNLLSAIPYIGSTLVEWIWGGFSVDKATLTRFFAFHFILPFIITAFVLVHLLFLHETGSNNPSGLNSNSDKIPFHPYYTIKDLLGILFLLTALMILALFFPDILGDPDNYTPANPLNTPAHIKPEWYFLFAYAILRSIPNKLGGVLALLLSILILMAFPLLNTSKQHGLIFRPITQTIYWILIANLLVLTWIGGQPVEYPFTMIGQIASITYFAIILILMPVSNTIENNIIKL</sequence>
<organism>
    <name type="scientific">Akodon dolores</name>
    <name type="common">Dolorous grass mouse</name>
    <dbReference type="NCBI Taxonomy" id="240584"/>
    <lineage>
        <taxon>Eukaryota</taxon>
        <taxon>Metazoa</taxon>
        <taxon>Chordata</taxon>
        <taxon>Craniata</taxon>
        <taxon>Vertebrata</taxon>
        <taxon>Euteleostomi</taxon>
        <taxon>Mammalia</taxon>
        <taxon>Eutheria</taxon>
        <taxon>Euarchontoglires</taxon>
        <taxon>Glires</taxon>
        <taxon>Rodentia</taxon>
        <taxon>Myomorpha</taxon>
        <taxon>Muroidea</taxon>
        <taxon>Cricetidae</taxon>
        <taxon>Sigmodontinae</taxon>
        <taxon>Akodon</taxon>
    </lineage>
</organism>
<geneLocation type="mitochondrion"/>
<keyword id="KW-0249">Electron transport</keyword>
<keyword id="KW-0349">Heme</keyword>
<keyword id="KW-0408">Iron</keyword>
<keyword id="KW-0472">Membrane</keyword>
<keyword id="KW-0479">Metal-binding</keyword>
<keyword id="KW-0496">Mitochondrion</keyword>
<keyword id="KW-0999">Mitochondrion inner membrane</keyword>
<keyword id="KW-0679">Respiratory chain</keyword>
<keyword id="KW-0812">Transmembrane</keyword>
<keyword id="KW-1133">Transmembrane helix</keyword>
<keyword id="KW-0813">Transport</keyword>
<keyword id="KW-0830">Ubiquinone</keyword>